<evidence type="ECO:0000255" key="1">
    <source>
        <dbReference type="HAMAP-Rule" id="MF_02121"/>
    </source>
</evidence>
<keyword id="KW-0028">Amino-acid biosynthesis</keyword>
<keyword id="KW-0220">Diaminopimelate biosynthesis</keyword>
<keyword id="KW-0457">Lysine biosynthesis</keyword>
<keyword id="KW-0486">Methionine biosynthesis</keyword>
<keyword id="KW-0521">NADP</keyword>
<keyword id="KW-0560">Oxidoreductase</keyword>
<keyword id="KW-0791">Threonine biosynthesis</keyword>
<proteinExistence type="inferred from homology"/>
<name>DHAS_HELPJ</name>
<reference key="1">
    <citation type="journal article" date="1999" name="Nature">
        <title>Genomic sequence comparison of two unrelated isolates of the human gastric pathogen Helicobacter pylori.</title>
        <authorList>
            <person name="Alm R.A."/>
            <person name="Ling L.-S.L."/>
            <person name="Moir D.T."/>
            <person name="King B.L."/>
            <person name="Brown E.D."/>
            <person name="Doig P.C."/>
            <person name="Smith D.R."/>
            <person name="Noonan B."/>
            <person name="Guild B.C."/>
            <person name="deJonge B.L."/>
            <person name="Carmel G."/>
            <person name="Tummino P.J."/>
            <person name="Caruso A."/>
            <person name="Uria-Nickelsen M."/>
            <person name="Mills D.M."/>
            <person name="Ives C."/>
            <person name="Gibson R."/>
            <person name="Merberg D."/>
            <person name="Mills S.D."/>
            <person name="Jiang Q."/>
            <person name="Taylor D.E."/>
            <person name="Vovis G.F."/>
            <person name="Trust T.J."/>
        </authorList>
    </citation>
    <scope>NUCLEOTIDE SEQUENCE [LARGE SCALE GENOMIC DNA]</scope>
    <source>
        <strain>J99 / ATCC 700824</strain>
    </source>
</reference>
<feature type="chain" id="PRO_0000141377" description="Aspartate-semialdehyde dehydrogenase">
    <location>
        <begin position="1"/>
        <end position="346"/>
    </location>
</feature>
<feature type="active site" description="Acyl-thioester intermediate" evidence="1">
    <location>
        <position position="131"/>
    </location>
</feature>
<feature type="active site" description="Proton acceptor" evidence="1">
    <location>
        <position position="253"/>
    </location>
</feature>
<feature type="binding site" evidence="1">
    <location>
        <begin position="12"/>
        <end position="15"/>
    </location>
    <ligand>
        <name>NADP(+)</name>
        <dbReference type="ChEBI" id="CHEBI:58349"/>
    </ligand>
</feature>
<feature type="binding site" evidence="1">
    <location>
        <begin position="40"/>
        <end position="41"/>
    </location>
    <ligand>
        <name>NADP(+)</name>
        <dbReference type="ChEBI" id="CHEBI:58349"/>
    </ligand>
</feature>
<feature type="binding site" evidence="1">
    <location>
        <position position="101"/>
    </location>
    <ligand>
        <name>phosphate</name>
        <dbReference type="ChEBI" id="CHEBI:43474"/>
    </ligand>
</feature>
<feature type="binding site" evidence="1">
    <location>
        <position position="158"/>
    </location>
    <ligand>
        <name>substrate</name>
    </ligand>
</feature>
<feature type="binding site" evidence="1">
    <location>
        <begin position="161"/>
        <end position="162"/>
    </location>
    <ligand>
        <name>NADP(+)</name>
        <dbReference type="ChEBI" id="CHEBI:58349"/>
    </ligand>
</feature>
<feature type="binding site" evidence="1">
    <location>
        <position position="225"/>
    </location>
    <ligand>
        <name>phosphate</name>
        <dbReference type="ChEBI" id="CHEBI:43474"/>
    </ligand>
</feature>
<feature type="binding site" evidence="1">
    <location>
        <position position="246"/>
    </location>
    <ligand>
        <name>substrate</name>
    </ligand>
</feature>
<feature type="binding site" evidence="1">
    <location>
        <position position="326"/>
    </location>
    <ligand>
        <name>NADP(+)</name>
        <dbReference type="ChEBI" id="CHEBI:58349"/>
    </ligand>
</feature>
<dbReference type="EC" id="1.2.1.11" evidence="1"/>
<dbReference type="EMBL" id="AE001439">
    <property type="protein sequence ID" value="AAD06695.1"/>
    <property type="molecule type" value="Genomic_DNA"/>
</dbReference>
<dbReference type="PIR" id="C71847">
    <property type="entry name" value="C71847"/>
</dbReference>
<dbReference type="RefSeq" id="WP_000860865.1">
    <property type="nucleotide sequence ID" value="NC_000921.1"/>
</dbReference>
<dbReference type="SMR" id="Q9ZK28"/>
<dbReference type="KEGG" id="hpj:jhp_1114"/>
<dbReference type="PATRIC" id="fig|85963.30.peg.1464"/>
<dbReference type="eggNOG" id="COG0136">
    <property type="taxonomic scope" value="Bacteria"/>
</dbReference>
<dbReference type="UniPathway" id="UPA00034">
    <property type="reaction ID" value="UER00016"/>
</dbReference>
<dbReference type="UniPathway" id="UPA00050">
    <property type="reaction ID" value="UER00463"/>
</dbReference>
<dbReference type="UniPathway" id="UPA00051">
    <property type="reaction ID" value="UER00464"/>
</dbReference>
<dbReference type="Proteomes" id="UP000000804">
    <property type="component" value="Chromosome"/>
</dbReference>
<dbReference type="GO" id="GO:0004073">
    <property type="term" value="F:aspartate-semialdehyde dehydrogenase activity"/>
    <property type="evidence" value="ECO:0007669"/>
    <property type="project" value="UniProtKB-UniRule"/>
</dbReference>
<dbReference type="GO" id="GO:0051287">
    <property type="term" value="F:NAD binding"/>
    <property type="evidence" value="ECO:0007669"/>
    <property type="project" value="InterPro"/>
</dbReference>
<dbReference type="GO" id="GO:0050661">
    <property type="term" value="F:NADP binding"/>
    <property type="evidence" value="ECO:0007669"/>
    <property type="project" value="UniProtKB-UniRule"/>
</dbReference>
<dbReference type="GO" id="GO:0046983">
    <property type="term" value="F:protein dimerization activity"/>
    <property type="evidence" value="ECO:0007669"/>
    <property type="project" value="InterPro"/>
</dbReference>
<dbReference type="GO" id="GO:0071266">
    <property type="term" value="P:'de novo' L-methionine biosynthetic process"/>
    <property type="evidence" value="ECO:0007669"/>
    <property type="project" value="UniProtKB-UniRule"/>
</dbReference>
<dbReference type="GO" id="GO:0019877">
    <property type="term" value="P:diaminopimelate biosynthetic process"/>
    <property type="evidence" value="ECO:0007669"/>
    <property type="project" value="UniProtKB-UniRule"/>
</dbReference>
<dbReference type="GO" id="GO:0009097">
    <property type="term" value="P:isoleucine biosynthetic process"/>
    <property type="evidence" value="ECO:0007669"/>
    <property type="project" value="InterPro"/>
</dbReference>
<dbReference type="GO" id="GO:0009089">
    <property type="term" value="P:lysine biosynthetic process via diaminopimelate"/>
    <property type="evidence" value="ECO:0007669"/>
    <property type="project" value="UniProtKB-UniRule"/>
</dbReference>
<dbReference type="GO" id="GO:0009088">
    <property type="term" value="P:threonine biosynthetic process"/>
    <property type="evidence" value="ECO:0007669"/>
    <property type="project" value="UniProtKB-UniRule"/>
</dbReference>
<dbReference type="CDD" id="cd18131">
    <property type="entry name" value="ASADH_C_bac_euk_like"/>
    <property type="match status" value="1"/>
</dbReference>
<dbReference type="CDD" id="cd02316">
    <property type="entry name" value="VcASADH2_like_N"/>
    <property type="match status" value="1"/>
</dbReference>
<dbReference type="Gene3D" id="3.30.360.10">
    <property type="entry name" value="Dihydrodipicolinate Reductase, domain 2"/>
    <property type="match status" value="1"/>
</dbReference>
<dbReference type="Gene3D" id="3.40.50.720">
    <property type="entry name" value="NAD(P)-binding Rossmann-like Domain"/>
    <property type="match status" value="1"/>
</dbReference>
<dbReference type="HAMAP" id="MF_02121">
    <property type="entry name" value="ASADH"/>
    <property type="match status" value="1"/>
</dbReference>
<dbReference type="InterPro" id="IPR000319">
    <property type="entry name" value="Asp-semialdehyde_DH_CS"/>
</dbReference>
<dbReference type="InterPro" id="IPR012080">
    <property type="entry name" value="Asp_semialdehyde_DH"/>
</dbReference>
<dbReference type="InterPro" id="IPR005986">
    <property type="entry name" value="Asp_semialdehyde_DH_beta"/>
</dbReference>
<dbReference type="InterPro" id="IPR036291">
    <property type="entry name" value="NAD(P)-bd_dom_sf"/>
</dbReference>
<dbReference type="InterPro" id="IPR000534">
    <property type="entry name" value="Semialdehyde_DH_NAD-bd"/>
</dbReference>
<dbReference type="InterPro" id="IPR012280">
    <property type="entry name" value="Semialdhyde_DH_dimer_dom"/>
</dbReference>
<dbReference type="NCBIfam" id="TIGR01296">
    <property type="entry name" value="asd_B"/>
    <property type="match status" value="1"/>
</dbReference>
<dbReference type="NCBIfam" id="NF011456">
    <property type="entry name" value="PRK14874.1"/>
    <property type="match status" value="1"/>
</dbReference>
<dbReference type="PANTHER" id="PTHR46278:SF2">
    <property type="entry name" value="ASPARTATE-SEMIALDEHYDE DEHYDROGENASE"/>
    <property type="match status" value="1"/>
</dbReference>
<dbReference type="PANTHER" id="PTHR46278">
    <property type="entry name" value="DEHYDROGENASE, PUTATIVE-RELATED"/>
    <property type="match status" value="1"/>
</dbReference>
<dbReference type="Pfam" id="PF01118">
    <property type="entry name" value="Semialdhyde_dh"/>
    <property type="match status" value="1"/>
</dbReference>
<dbReference type="Pfam" id="PF02774">
    <property type="entry name" value="Semialdhyde_dhC"/>
    <property type="match status" value="1"/>
</dbReference>
<dbReference type="PIRSF" id="PIRSF000148">
    <property type="entry name" value="ASA_dh"/>
    <property type="match status" value="1"/>
</dbReference>
<dbReference type="SMART" id="SM00859">
    <property type="entry name" value="Semialdhyde_dh"/>
    <property type="match status" value="1"/>
</dbReference>
<dbReference type="SUPFAM" id="SSF55347">
    <property type="entry name" value="Glyceraldehyde-3-phosphate dehydrogenase-like, C-terminal domain"/>
    <property type="match status" value="1"/>
</dbReference>
<dbReference type="SUPFAM" id="SSF51735">
    <property type="entry name" value="NAD(P)-binding Rossmann-fold domains"/>
    <property type="match status" value="1"/>
</dbReference>
<dbReference type="PROSITE" id="PS01103">
    <property type="entry name" value="ASD"/>
    <property type="match status" value="1"/>
</dbReference>
<sequence length="346" mass="38131">MKTYNVAIVGASGAVGQELIKGLENSFFPIKKFVPLASARSAGKKIRAFNKDYEILETTHEVFEKEEIDIAFFSAGGSVSEEFAISASKTALVIDNTSFFRLNKDVPLVVPEINAQEIFNAPLNIIANPNCSTIQMTQILNPLHLHFKIKSVIVSTYQAVSGAGNKGIESLKNELKTALEHLEKDPAIDLNQVLQAGAFAYPIAFNAIAHIDTFKENGYTKEELKMVHETHKIMGVDFPISATCVRVPVLRSHSESLSIAFEKEFDLKEVYEVLKNAPSVVVCDDPSHNLYPTPLKASHTDSVFIGRLRKDLFDKKTLHGFCVADQLRVGAATNALKIALHYIKNA</sequence>
<organism>
    <name type="scientific">Helicobacter pylori (strain J99 / ATCC 700824)</name>
    <name type="common">Campylobacter pylori J99</name>
    <dbReference type="NCBI Taxonomy" id="85963"/>
    <lineage>
        <taxon>Bacteria</taxon>
        <taxon>Pseudomonadati</taxon>
        <taxon>Campylobacterota</taxon>
        <taxon>Epsilonproteobacteria</taxon>
        <taxon>Campylobacterales</taxon>
        <taxon>Helicobacteraceae</taxon>
        <taxon>Helicobacter</taxon>
    </lineage>
</organism>
<accession>Q9ZK28</accession>
<gene>
    <name evidence="1" type="primary">asd</name>
    <name type="ordered locus">jhp_1114</name>
</gene>
<comment type="function">
    <text evidence="1">Catalyzes the NADPH-dependent formation of L-aspartate-semialdehyde (L-ASA) by the reductive dephosphorylation of L-aspartyl-4-phosphate.</text>
</comment>
<comment type="catalytic activity">
    <reaction evidence="1">
        <text>L-aspartate 4-semialdehyde + phosphate + NADP(+) = 4-phospho-L-aspartate + NADPH + H(+)</text>
        <dbReference type="Rhea" id="RHEA:24284"/>
        <dbReference type="ChEBI" id="CHEBI:15378"/>
        <dbReference type="ChEBI" id="CHEBI:43474"/>
        <dbReference type="ChEBI" id="CHEBI:57535"/>
        <dbReference type="ChEBI" id="CHEBI:57783"/>
        <dbReference type="ChEBI" id="CHEBI:58349"/>
        <dbReference type="ChEBI" id="CHEBI:537519"/>
        <dbReference type="EC" id="1.2.1.11"/>
    </reaction>
</comment>
<comment type="pathway">
    <text evidence="1">Amino-acid biosynthesis; L-lysine biosynthesis via DAP pathway; (S)-tetrahydrodipicolinate from L-aspartate: step 2/4.</text>
</comment>
<comment type="pathway">
    <text evidence="1">Amino-acid biosynthesis; L-methionine biosynthesis via de novo pathway; L-homoserine from L-aspartate: step 2/3.</text>
</comment>
<comment type="pathway">
    <text evidence="1">Amino-acid biosynthesis; L-threonine biosynthesis; L-threonine from L-aspartate: step 2/5.</text>
</comment>
<comment type="subunit">
    <text evidence="1">Homodimer.</text>
</comment>
<comment type="similarity">
    <text evidence="1">Belongs to the aspartate-semialdehyde dehydrogenase family.</text>
</comment>
<protein>
    <recommendedName>
        <fullName evidence="1">Aspartate-semialdehyde dehydrogenase</fullName>
        <shortName evidence="1">ASA dehydrogenase</shortName>
        <shortName evidence="1">ASADH</shortName>
        <ecNumber evidence="1">1.2.1.11</ecNumber>
    </recommendedName>
    <alternativeName>
        <fullName evidence="1">Aspartate-beta-semialdehyde dehydrogenase</fullName>
    </alternativeName>
</protein>